<reference key="1">
    <citation type="journal article" date="2000" name="Virology">
        <title>A novel lipothrixvirus, SIFV, of the extremely thermophilic crenarchaeon Sulfolobus.</title>
        <authorList>
            <person name="Arnold H.P."/>
            <person name="Zillig W."/>
            <person name="Ziese U."/>
            <person name="Holz I."/>
            <person name="Crosby M."/>
            <person name="Utterback T."/>
            <person name="Weidmann J.F."/>
            <person name="Umayam L.A."/>
            <person name="Teffera K."/>
            <person name="Kristjanson J.K."/>
            <person name="Klenk H.P."/>
            <person name="Nelson K.E."/>
            <person name="Fraser C.M."/>
        </authorList>
    </citation>
    <scope>NUCLEOTIDE SEQUENCE [GENOMIC DNA]</scope>
</reference>
<feature type="chain" id="PRO_0000385436" description="Uncharacterized protein 73">
    <location>
        <begin position="1"/>
        <end position="32"/>
    </location>
</feature>
<proteinExistence type="predicted"/>
<protein>
    <recommendedName>
        <fullName>Uncharacterized protein 73</fullName>
    </recommendedName>
</protein>
<organismHost>
    <name type="scientific">Saccharolobus islandicus</name>
    <name type="common">Sulfolobus islandicus</name>
    <dbReference type="NCBI Taxonomy" id="43080"/>
</organismHost>
<organism>
    <name type="scientific">Sulfolobus islandicus filamentous virus (isolate Iceland/Hveragerdi)</name>
    <name type="common">SIFV</name>
    <dbReference type="NCBI Taxonomy" id="654908"/>
    <lineage>
        <taxon>Viruses</taxon>
        <taxon>Adnaviria</taxon>
        <taxon>Zilligvirae</taxon>
        <taxon>Taleaviricota</taxon>
        <taxon>Tokiviricetes</taxon>
        <taxon>Ligamenvirales</taxon>
        <taxon>Lipothrixviridae</taxon>
        <taxon>Betalipothrixvirus</taxon>
        <taxon>Sulfolobus islandicus filamentous virus</taxon>
    </lineage>
</organism>
<dbReference type="EMBL" id="AF440571">
    <property type="protein sequence ID" value="AAL27782.1"/>
    <property type="molecule type" value="Genomic_DNA"/>
</dbReference>
<dbReference type="RefSeq" id="NP_445736.1">
    <property type="nucleotide sequence ID" value="NC_003214.2"/>
</dbReference>
<dbReference type="GeneID" id="922282"/>
<dbReference type="KEGG" id="vg:922282"/>
<dbReference type="Proteomes" id="UP000007017">
    <property type="component" value="Segment"/>
</dbReference>
<accession>Q914F9</accession>
<keyword id="KW-1185">Reference proteome</keyword>
<name>Y073_SIFVH</name>
<gene>
    <name type="primary">SIFV0073</name>
</gene>
<sequence>MIFTKINVIFIKNPNRKKKKCKIVNVNITMGF</sequence>